<name>SPAG4_MOUSE</name>
<accession>Q9JJF2</accession>
<accession>A3KGK4</accession>
<keyword id="KW-0025">Alternative splicing</keyword>
<keyword id="KW-0966">Cell projection</keyword>
<keyword id="KW-0969">Cilium</keyword>
<keyword id="KW-0175">Coiled coil</keyword>
<keyword id="KW-0963">Cytoplasm</keyword>
<keyword id="KW-0206">Cytoskeleton</keyword>
<keyword id="KW-0221">Differentiation</keyword>
<keyword id="KW-0282">Flagellum</keyword>
<keyword id="KW-0472">Membrane</keyword>
<keyword id="KW-0539">Nucleus</keyword>
<keyword id="KW-1185">Reference proteome</keyword>
<keyword id="KW-0744">Spermatogenesis</keyword>
<keyword id="KW-0812">Transmembrane</keyword>
<keyword id="KW-1133">Transmembrane helix</keyword>
<proteinExistence type="evidence at protein level"/>
<reference key="1">
    <citation type="submission" date="2000-04" db="EMBL/GenBank/DDBJ databases">
        <title>Isolation of full-length cDNA clones from mouse brain cDNA library made by oligo-capping method.</title>
        <authorList>
            <person name="Osada N."/>
            <person name="Kusuda J."/>
            <person name="Tanuma R."/>
            <person name="Ito A."/>
            <person name="Hirata M."/>
            <person name="Sugano S."/>
            <person name="Hashimoto K."/>
        </authorList>
    </citation>
    <scope>NUCLEOTIDE SEQUENCE [LARGE SCALE MRNA] (ISOFORM 2)</scope>
    <source>
        <strain>C57BL/6J</strain>
        <tissue>Brain</tissue>
    </source>
</reference>
<reference key="2">
    <citation type="journal article" date="2009" name="PLoS Biol.">
        <title>Lineage-specific biology revealed by a finished genome assembly of the mouse.</title>
        <authorList>
            <person name="Church D.M."/>
            <person name="Goodstadt L."/>
            <person name="Hillier L.W."/>
            <person name="Zody M.C."/>
            <person name="Goldstein S."/>
            <person name="She X."/>
            <person name="Bult C.J."/>
            <person name="Agarwala R."/>
            <person name="Cherry J.L."/>
            <person name="DiCuccio M."/>
            <person name="Hlavina W."/>
            <person name="Kapustin Y."/>
            <person name="Meric P."/>
            <person name="Maglott D."/>
            <person name="Birtle Z."/>
            <person name="Marques A.C."/>
            <person name="Graves T."/>
            <person name="Zhou S."/>
            <person name="Teague B."/>
            <person name="Potamousis K."/>
            <person name="Churas C."/>
            <person name="Place M."/>
            <person name="Herschleb J."/>
            <person name="Runnheim R."/>
            <person name="Forrest D."/>
            <person name="Amos-Landgraf J."/>
            <person name="Schwartz D.C."/>
            <person name="Cheng Z."/>
            <person name="Lindblad-Toh K."/>
            <person name="Eichler E.E."/>
            <person name="Ponting C.P."/>
        </authorList>
    </citation>
    <scope>NUCLEOTIDE SEQUENCE [LARGE SCALE GENOMIC DNA]</scope>
    <source>
        <strain>C57BL/6J</strain>
    </source>
</reference>
<reference key="3">
    <citation type="submission" date="2005-07" db="EMBL/GenBank/DDBJ databases">
        <authorList>
            <person name="Mural R.J."/>
            <person name="Adams M.D."/>
            <person name="Myers E.W."/>
            <person name="Smith H.O."/>
            <person name="Venter J.C."/>
        </authorList>
    </citation>
    <scope>NUCLEOTIDE SEQUENCE [LARGE SCALE GENOMIC DNA]</scope>
</reference>
<reference key="4">
    <citation type="journal article" date="2000" name="Genome Res.">
        <title>Normalization and subtraction of cap-trapper-selected cDNAs to prepare full-length cDNA libraries for rapid discovery of new genes.</title>
        <authorList>
            <person name="Carninci P."/>
            <person name="Shibata Y."/>
            <person name="Hayatsu N."/>
            <person name="Sugahara Y."/>
            <person name="Shibata K."/>
            <person name="Itoh M."/>
            <person name="Konno H."/>
            <person name="Okazaki Y."/>
            <person name="Muramatsu M."/>
            <person name="Hayashizaki Y."/>
        </authorList>
    </citation>
    <scope>NUCLEOTIDE SEQUENCE [MRNA] OF 1-274 (ISOFORM 1)</scope>
    <source>
        <tissue>Testis</tissue>
    </source>
</reference>
<reference key="5">
    <citation type="journal article" date="2004" name="Genome Res.">
        <title>The status, quality, and expansion of the NIH full-length cDNA project: the Mammalian Gene Collection (MGC).</title>
        <authorList>
            <consortium name="The MGC Project Team"/>
        </authorList>
    </citation>
    <scope>NUCLEOTIDE SEQUENCE [LARGE SCALE MRNA] OF 15-443 (ISOFORM 1)</scope>
    <source>
        <tissue>Testis</tissue>
    </source>
</reference>
<reference key="6">
    <citation type="journal article" date="1999" name="Dev. Biol.">
        <title>Spag4, a novel sperm protein, binds outer dense-fiber protein Odf1 and localizes to microtubules of manchette and axoneme.</title>
        <authorList>
            <person name="Shao X."/>
            <person name="Tarnasky H.A."/>
            <person name="Lee J.P."/>
            <person name="Oko R."/>
            <person name="van der Hoorn F.A."/>
        </authorList>
    </citation>
    <scope>TISSUE SPECIFICITY</scope>
</reference>
<reference key="7">
    <citation type="journal article" date="2010" name="Cell">
        <title>A tissue-specific atlas of mouse protein phosphorylation and expression.</title>
        <authorList>
            <person name="Huttlin E.L."/>
            <person name="Jedrychowski M.P."/>
            <person name="Elias J.E."/>
            <person name="Goswami T."/>
            <person name="Rad R."/>
            <person name="Beausoleil S.A."/>
            <person name="Villen J."/>
            <person name="Haas W."/>
            <person name="Sowa M.E."/>
            <person name="Gygi S.P."/>
        </authorList>
    </citation>
    <scope>IDENTIFICATION BY MASS SPECTROMETRY [LARGE SCALE ANALYSIS]</scope>
    <source>
        <tissue>Testis</tissue>
    </source>
</reference>
<reference key="8">
    <citation type="journal article" date="2015" name="Biol. Open">
        <title>The LINC complex component Sun4 plays a crucial role in sperm head formation and fertility.</title>
        <authorList>
            <person name="Pasch E."/>
            <person name="Link J."/>
            <person name="Beck C."/>
            <person name="Scheuerle S."/>
            <person name="Alsheimer M."/>
        </authorList>
    </citation>
    <scope>SUBCELLULAR LOCATION</scope>
    <scope>DEVELOPMENTAL STAGE</scope>
    <scope>TISSUE SPECIFICITY</scope>
    <scope>FUNCTION</scope>
    <scope>INTERACTION WITH SUN3 AND SYNE1; SELF-ASSOCIATION</scope>
    <scope>DISRUPTION PHENOTYPE</scope>
</reference>
<gene>
    <name type="primary">Spag4</name>
    <name type="ORF">MNCb-0953</name>
    <name type="ORF">Sun4</name>
</gene>
<protein>
    <recommendedName>
        <fullName>Sperm-associated antigen 4 protein</fullName>
    </recommendedName>
    <alternativeName>
        <fullName>Outer dense fiber-associated protein SPAG4</fullName>
    </alternativeName>
    <alternativeName>
        <fullName>SUN domain-containing protein 4</fullName>
    </alternativeName>
</protein>
<evidence type="ECO:0000250" key="1"/>
<evidence type="ECO:0000250" key="2">
    <source>
        <dbReference type="UniProtKB" id="O55034"/>
    </source>
</evidence>
<evidence type="ECO:0000250" key="3">
    <source>
        <dbReference type="UniProtKB" id="Q9NPE6"/>
    </source>
</evidence>
<evidence type="ECO:0000255" key="4"/>
<evidence type="ECO:0000255" key="5">
    <source>
        <dbReference type="PROSITE-ProRule" id="PRU00802"/>
    </source>
</evidence>
<evidence type="ECO:0000256" key="6">
    <source>
        <dbReference type="SAM" id="MobiDB-lite"/>
    </source>
</evidence>
<evidence type="ECO:0000269" key="7">
    <source>
    </source>
</evidence>
<evidence type="ECO:0000269" key="8">
    <source>
    </source>
</evidence>
<evidence type="ECO:0000303" key="9">
    <source ref="1"/>
</evidence>
<evidence type="ECO:0000305" key="10"/>
<sequence>MRRSPRSGSAASSHNHTPNFYSENSNSSHSATSGDSNGRRSAGPELGEPEGRRARGSSCGEPALSPGMPGGDTWAGSSRPKLAPRSHNGQTACGAATVRGGASEPSGSSVVLEEQLNLLPILDLRQEMPTPRVSKSFLSLLFQVLSMVLSLAVDGLVCVCREICSIRFLFTAVSLLSIFLAALWWGLLYLIPPLENEPTEMLTLSQYHHRVHSQGQQLQQLQAELNKLHKEVSSVRAAHSERVAKLVFQRLNEDFVRKPDYALSSVGASIDLEKTSSDYEDQNTAYFWNRLSFWNYARPPSVILEPDVFPGNCWAFEGDKGQVVIRLPGHVQLSDITLQHPPPTVAHTGGASSAPRDFAVYGLQADDETEVFLGKFIFDVQKSEIQTFHLQNDPPSAFPKVKIQILSNWGHPRFTCLYRVRAHGVRTSEWADDNATGVTGGPH</sequence>
<dbReference type="EMBL" id="AB041554">
    <property type="protein sequence ID" value="BAA95039.1"/>
    <property type="molecule type" value="mRNA"/>
</dbReference>
<dbReference type="EMBL" id="AL833786">
    <property type="status" value="NOT_ANNOTATED_CDS"/>
    <property type="molecule type" value="Genomic_DNA"/>
</dbReference>
<dbReference type="EMBL" id="CH466551">
    <property type="protein sequence ID" value="EDL06167.1"/>
    <property type="molecule type" value="Genomic_DNA"/>
</dbReference>
<dbReference type="EMBL" id="BB610287">
    <property type="status" value="NOT_ANNOTATED_CDS"/>
    <property type="molecule type" value="mRNA"/>
</dbReference>
<dbReference type="EMBL" id="BU937622">
    <property type="status" value="NOT_ANNOTATED_CDS"/>
    <property type="molecule type" value="mRNA"/>
</dbReference>
<dbReference type="EMBL" id="CA466584">
    <property type="status" value="NOT_ANNOTATED_CDS"/>
    <property type="molecule type" value="mRNA"/>
</dbReference>
<dbReference type="CCDS" id="CCDS50777.1">
    <molecule id="Q9JJF2-1"/>
</dbReference>
<dbReference type="RefSeq" id="NP_631890.3">
    <molecule id="Q9JJF2-1"/>
    <property type="nucleotide sequence ID" value="NM_139151.4"/>
</dbReference>
<dbReference type="SMR" id="Q9JJF2"/>
<dbReference type="BioGRID" id="232842">
    <property type="interactions" value="1"/>
</dbReference>
<dbReference type="FunCoup" id="Q9JJF2">
    <property type="interactions" value="27"/>
</dbReference>
<dbReference type="IntAct" id="Q9JJF2">
    <property type="interactions" value="2"/>
</dbReference>
<dbReference type="STRING" id="10090.ENSMUSP00000036484"/>
<dbReference type="GlyGen" id="Q9JJF2">
    <property type="glycosylation" value="1 site"/>
</dbReference>
<dbReference type="PhosphoSitePlus" id="Q9JJF2"/>
<dbReference type="SwissPalm" id="Q9JJF2"/>
<dbReference type="PaxDb" id="10090-ENSMUSP00000036484"/>
<dbReference type="ProteomicsDB" id="257301">
    <molecule id="Q9JJF2-1"/>
</dbReference>
<dbReference type="ProteomicsDB" id="257302">
    <molecule id="Q9JJF2-2"/>
</dbReference>
<dbReference type="Antibodypedia" id="26200">
    <property type="antibodies" value="99 antibodies from 19 providers"/>
</dbReference>
<dbReference type="DNASU" id="245865"/>
<dbReference type="Ensembl" id="ENSMUST00000038860.12">
    <molecule id="Q9JJF2-1"/>
    <property type="protein sequence ID" value="ENSMUSP00000036484.6"/>
    <property type="gene ID" value="ENSMUSG00000038180.12"/>
</dbReference>
<dbReference type="GeneID" id="245865"/>
<dbReference type="KEGG" id="mmu:245865"/>
<dbReference type="UCSC" id="uc008nmc.1">
    <molecule id="Q9JJF2-1"/>
    <property type="organism name" value="mouse"/>
</dbReference>
<dbReference type="AGR" id="MGI:2444120"/>
<dbReference type="CTD" id="6676"/>
<dbReference type="MGI" id="MGI:2444120">
    <property type="gene designation" value="Spag4"/>
</dbReference>
<dbReference type="VEuPathDB" id="HostDB:ENSMUSG00000038180"/>
<dbReference type="eggNOG" id="KOG2687">
    <property type="taxonomic scope" value="Eukaryota"/>
</dbReference>
<dbReference type="GeneTree" id="ENSGT00940000161566"/>
<dbReference type="HOGENOM" id="CLU_043737_2_0_1"/>
<dbReference type="InParanoid" id="Q9JJF2"/>
<dbReference type="OMA" id="PRKHTPN"/>
<dbReference type="OrthoDB" id="342281at2759"/>
<dbReference type="PhylomeDB" id="Q9JJF2"/>
<dbReference type="TreeFam" id="TF323915"/>
<dbReference type="BioGRID-ORCS" id="245865">
    <property type="hits" value="1 hit in 77 CRISPR screens"/>
</dbReference>
<dbReference type="ChiTaRS" id="Spag4">
    <property type="organism name" value="mouse"/>
</dbReference>
<dbReference type="PRO" id="PR:Q9JJF2"/>
<dbReference type="Proteomes" id="UP000000589">
    <property type="component" value="Chromosome 2"/>
</dbReference>
<dbReference type="RNAct" id="Q9JJF2">
    <property type="molecule type" value="protein"/>
</dbReference>
<dbReference type="Bgee" id="ENSMUSG00000038180">
    <property type="expression patterns" value="Expressed in spermatid and 66 other cell types or tissues"/>
</dbReference>
<dbReference type="ExpressionAtlas" id="Q9JJF2">
    <property type="expression patterns" value="baseline and differential"/>
</dbReference>
<dbReference type="GO" id="GO:0005737">
    <property type="term" value="C:cytoplasm"/>
    <property type="evidence" value="ECO:0007669"/>
    <property type="project" value="UniProtKB-KW"/>
</dbReference>
<dbReference type="GO" id="GO:0005856">
    <property type="term" value="C:cytoskeleton"/>
    <property type="evidence" value="ECO:0007669"/>
    <property type="project" value="UniProtKB-SubCell"/>
</dbReference>
<dbReference type="GO" id="GO:0031514">
    <property type="term" value="C:motile cilium"/>
    <property type="evidence" value="ECO:0007669"/>
    <property type="project" value="UniProtKB-KW"/>
</dbReference>
<dbReference type="GO" id="GO:0005637">
    <property type="term" value="C:nuclear inner membrane"/>
    <property type="evidence" value="ECO:0007669"/>
    <property type="project" value="UniProtKB-SubCell"/>
</dbReference>
<dbReference type="GO" id="GO:0030154">
    <property type="term" value="P:cell differentiation"/>
    <property type="evidence" value="ECO:0007669"/>
    <property type="project" value="UniProtKB-KW"/>
</dbReference>
<dbReference type="GO" id="GO:0007283">
    <property type="term" value="P:spermatogenesis"/>
    <property type="evidence" value="ECO:0007669"/>
    <property type="project" value="UniProtKB-KW"/>
</dbReference>
<dbReference type="FunFam" id="2.60.120.260:FF:000032">
    <property type="entry name" value="Sperm associated antigen 4 (Predicted)"/>
    <property type="match status" value="1"/>
</dbReference>
<dbReference type="Gene3D" id="2.60.120.260">
    <property type="entry name" value="Galactose-binding domain-like"/>
    <property type="match status" value="1"/>
</dbReference>
<dbReference type="InterPro" id="IPR045119">
    <property type="entry name" value="SUN1-5"/>
</dbReference>
<dbReference type="InterPro" id="IPR012919">
    <property type="entry name" value="SUN_dom"/>
</dbReference>
<dbReference type="PANTHER" id="PTHR12911">
    <property type="entry name" value="SAD1/UNC-84-LIKE PROTEIN-RELATED"/>
    <property type="match status" value="1"/>
</dbReference>
<dbReference type="PANTHER" id="PTHR12911:SF16">
    <property type="entry name" value="SPERM-ASSOCIATED ANTIGEN 4 PROTEIN"/>
    <property type="match status" value="1"/>
</dbReference>
<dbReference type="Pfam" id="PF07738">
    <property type="entry name" value="Sad1_UNC"/>
    <property type="match status" value="1"/>
</dbReference>
<dbReference type="PROSITE" id="PS51469">
    <property type="entry name" value="SUN"/>
    <property type="match status" value="1"/>
</dbReference>
<comment type="function">
    <text evidence="8">Involved in spermatogenesis. Required for sperm head formation but not required to establish and maintain general polarity of the sperm head. Required for anchoring and organization of the manchette. Required for targeting of SUN3 and probably SYNE1 through a probable SUN1:SYNE3 LINC complex to the nuclear envelope and involved in accurate posterior sperm head localization of the complex. May anchor SUN3 the nuclear envelope. Involved in maintenance of the nuclear envelope integrity. May assist the organization and assembly of outer dense fibers (ODFs), a specific structure of the sperm tail.</text>
</comment>
<comment type="subunit">
    <text evidence="2 3 8">Self-associates. Interacts with ODF1. May associate with microtubules (By similarity). Interacts with SUN3 and SYNE1; suggesting the formation of a spermatogenesis-specific LINC complex; a SUN domain-based heterotrimer of SPAG4 and SUN3 may associate with SYNE1 (PubMed:26621829). Interacts with SEPT12 and LMNB1; during spermatogenesis (By similarity).</text>
</comment>
<comment type="subcellular location">
    <subcellularLocation>
        <location evidence="10">Membrane</location>
        <topology evidence="10">Multi-pass membrane protein</topology>
    </subcellularLocation>
    <subcellularLocation>
        <location evidence="1">Cytoplasm</location>
        <location evidence="1">Cytoskeleton</location>
    </subcellularLocation>
</comment>
<comment type="subcellular location">
    <molecule>Isoform 1</molecule>
    <subcellularLocation>
        <location evidence="10">Membrane</location>
        <topology evidence="10">Multi-pass membrane protein</topology>
    </subcellularLocation>
    <subcellularLocation>
        <location evidence="2">Cytoplasm</location>
        <location evidence="2">Cytoskeleton</location>
    </subcellularLocation>
    <subcellularLocation>
        <location evidence="8">Nucleus envelope</location>
    </subcellularLocation>
    <subcellularLocation>
        <location evidence="10">Nucleus inner membrane</location>
    </subcellularLocation>
    <subcellularLocation>
        <location evidence="2">Cytoplasm</location>
        <location evidence="2">Cytoskeleton</location>
        <location evidence="2">Flagellum axoneme</location>
    </subcellularLocation>
    <text evidence="2 8">In spermatids, isoform 1 is localized in the transient manchette and in the axoneme of elongating spermatids and epididymal sperm (By similarity). Conflictingly is not found in axoneme but only associated with the manchette where cytoplasmic microtubules contact the nuclear envelope. Localizes at the posterior lateral side of round and elongating spermatids (PubMed:26621829).</text>
</comment>
<comment type="alternative products">
    <event type="alternative splicing"/>
    <isoform>
        <id>Q9JJF2-1</id>
        <name>1</name>
        <sequence type="displayed"/>
    </isoform>
    <isoform>
        <id>Q9JJF2-2</id>
        <name>2</name>
        <sequence type="described" ref="VSP_005958 VSP_005959"/>
    </isoform>
</comment>
<comment type="tissue specificity">
    <text evidence="7 8">Isoform 1 is testis specific and is exclusively expressed in spermatids.</text>
</comment>
<comment type="developmental stage">
    <text evidence="8">Weakly expressed at day 18 p.p. and increased expression at day 21-25 p.p. with increasing spermatid numbers.</text>
</comment>
<comment type="disruption phenotype">
    <text evidence="8">Male infertility with severe defects in sperm head formation and globozoospermia-like phenotype.</text>
</comment>
<comment type="caution">
    <text evidence="10">Although transmembrane domains are strongly predicted, they may rather represent hydrophobic globular domains associated with microtubules.</text>
</comment>
<organism>
    <name type="scientific">Mus musculus</name>
    <name type="common">Mouse</name>
    <dbReference type="NCBI Taxonomy" id="10090"/>
    <lineage>
        <taxon>Eukaryota</taxon>
        <taxon>Metazoa</taxon>
        <taxon>Chordata</taxon>
        <taxon>Craniata</taxon>
        <taxon>Vertebrata</taxon>
        <taxon>Euteleostomi</taxon>
        <taxon>Mammalia</taxon>
        <taxon>Eutheria</taxon>
        <taxon>Euarchontoglires</taxon>
        <taxon>Glires</taxon>
        <taxon>Rodentia</taxon>
        <taxon>Myomorpha</taxon>
        <taxon>Muroidea</taxon>
        <taxon>Muridae</taxon>
        <taxon>Murinae</taxon>
        <taxon>Mus</taxon>
        <taxon>Mus</taxon>
    </lineage>
</organism>
<feature type="chain" id="PRO_0000218917" description="Sperm-associated antigen 4 protein">
    <location>
        <begin position="1"/>
        <end position="443"/>
    </location>
</feature>
<feature type="transmembrane region" description="Helical" evidence="4">
    <location>
        <begin position="137"/>
        <end position="157"/>
    </location>
</feature>
<feature type="transmembrane region" description="Helical" evidence="4">
    <location>
        <begin position="168"/>
        <end position="188"/>
    </location>
</feature>
<feature type="domain" description="SUN" evidence="5">
    <location>
        <begin position="267"/>
        <end position="427"/>
    </location>
</feature>
<feature type="region of interest" description="Disordered" evidence="6">
    <location>
        <begin position="1"/>
        <end position="107"/>
    </location>
</feature>
<feature type="coiled-coil region" evidence="4">
    <location>
        <begin position="203"/>
        <end position="244"/>
    </location>
</feature>
<feature type="compositionally biased region" description="Low complexity" evidence="6">
    <location>
        <begin position="1"/>
        <end position="36"/>
    </location>
</feature>
<feature type="splice variant" id="VSP_005958" description="In isoform 2." evidence="9">
    <original>VRGGAS</original>
    <variation>NRLDLL</variation>
    <location>
        <begin position="98"/>
        <end position="103"/>
    </location>
</feature>
<feature type="splice variant" id="VSP_005959" description="In isoform 2." evidence="9">
    <location>
        <begin position="104"/>
        <end position="443"/>
    </location>
</feature>
<feature type="sequence conflict" description="In Ref. 1; BAA95039." evidence="10" ref="1">
    <original>K</original>
    <variation>E</variation>
    <location>
        <position position="81"/>
    </location>
</feature>
<feature type="sequence conflict" description="In Ref. 1; BAA95039." evidence="10" ref="1">
    <original>P</original>
    <variation>T</variation>
    <location>
        <position position="259"/>
    </location>
</feature>